<keyword id="KW-0067">ATP-binding</keyword>
<keyword id="KW-0963">Cytoplasm</keyword>
<keyword id="KW-0460">Magnesium</keyword>
<keyword id="KW-0479">Metal-binding</keyword>
<keyword id="KW-0547">Nucleotide-binding</keyword>
<keyword id="KW-0554">One-carbon metabolism</keyword>
<keyword id="KW-0630">Potassium</keyword>
<keyword id="KW-0808">Transferase</keyword>
<organism>
    <name type="scientific">Escherichia coli (strain SMS-3-5 / SECEC)</name>
    <dbReference type="NCBI Taxonomy" id="439855"/>
    <lineage>
        <taxon>Bacteria</taxon>
        <taxon>Pseudomonadati</taxon>
        <taxon>Pseudomonadota</taxon>
        <taxon>Gammaproteobacteria</taxon>
        <taxon>Enterobacterales</taxon>
        <taxon>Enterobacteriaceae</taxon>
        <taxon>Escherichia</taxon>
    </lineage>
</organism>
<comment type="function">
    <text evidence="1">Catalyzes the formation of S-adenosylmethionine (AdoMet) from methionine and ATP. The overall synthetic reaction is composed of two sequential steps, AdoMet formation and the subsequent tripolyphosphate hydrolysis which occurs prior to release of AdoMet from the enzyme.</text>
</comment>
<comment type="catalytic activity">
    <reaction evidence="1">
        <text>L-methionine + ATP + H2O = S-adenosyl-L-methionine + phosphate + diphosphate</text>
        <dbReference type="Rhea" id="RHEA:21080"/>
        <dbReference type="ChEBI" id="CHEBI:15377"/>
        <dbReference type="ChEBI" id="CHEBI:30616"/>
        <dbReference type="ChEBI" id="CHEBI:33019"/>
        <dbReference type="ChEBI" id="CHEBI:43474"/>
        <dbReference type="ChEBI" id="CHEBI:57844"/>
        <dbReference type="ChEBI" id="CHEBI:59789"/>
        <dbReference type="EC" id="2.5.1.6"/>
    </reaction>
</comment>
<comment type="cofactor">
    <cofactor evidence="1">
        <name>Mg(2+)</name>
        <dbReference type="ChEBI" id="CHEBI:18420"/>
    </cofactor>
    <text evidence="1">Binds 2 divalent ions per subunit.</text>
</comment>
<comment type="cofactor">
    <cofactor evidence="1">
        <name>K(+)</name>
        <dbReference type="ChEBI" id="CHEBI:29103"/>
    </cofactor>
    <text evidence="1">Binds 1 potassium ion per subunit.</text>
</comment>
<comment type="pathway">
    <text evidence="1">Amino-acid biosynthesis; S-adenosyl-L-methionine biosynthesis; S-adenosyl-L-methionine from L-methionine: step 1/1.</text>
</comment>
<comment type="subunit">
    <text evidence="1">Homotetramer; dimer of dimers.</text>
</comment>
<comment type="subcellular location">
    <subcellularLocation>
        <location evidence="1">Cytoplasm</location>
    </subcellularLocation>
</comment>
<comment type="similarity">
    <text evidence="1">Belongs to the AdoMet synthase family.</text>
</comment>
<dbReference type="EC" id="2.5.1.6" evidence="1"/>
<dbReference type="EMBL" id="CP000970">
    <property type="protein sequence ID" value="ACB17617.1"/>
    <property type="molecule type" value="Genomic_DNA"/>
</dbReference>
<dbReference type="RefSeq" id="WP_001062128.1">
    <property type="nucleotide sequence ID" value="NC_010498.1"/>
</dbReference>
<dbReference type="SMR" id="B1LDF1"/>
<dbReference type="BindingDB" id="B1LDF1"/>
<dbReference type="GeneID" id="93779055"/>
<dbReference type="KEGG" id="ecm:EcSMS35_3084"/>
<dbReference type="HOGENOM" id="CLU_041802_1_1_6"/>
<dbReference type="UniPathway" id="UPA00315">
    <property type="reaction ID" value="UER00080"/>
</dbReference>
<dbReference type="Proteomes" id="UP000007011">
    <property type="component" value="Chromosome"/>
</dbReference>
<dbReference type="GO" id="GO:0005737">
    <property type="term" value="C:cytoplasm"/>
    <property type="evidence" value="ECO:0007669"/>
    <property type="project" value="UniProtKB-SubCell"/>
</dbReference>
<dbReference type="GO" id="GO:0005524">
    <property type="term" value="F:ATP binding"/>
    <property type="evidence" value="ECO:0007669"/>
    <property type="project" value="UniProtKB-UniRule"/>
</dbReference>
<dbReference type="GO" id="GO:0000287">
    <property type="term" value="F:magnesium ion binding"/>
    <property type="evidence" value="ECO:0007669"/>
    <property type="project" value="UniProtKB-UniRule"/>
</dbReference>
<dbReference type="GO" id="GO:0004478">
    <property type="term" value="F:methionine adenosyltransferase activity"/>
    <property type="evidence" value="ECO:0007669"/>
    <property type="project" value="UniProtKB-UniRule"/>
</dbReference>
<dbReference type="GO" id="GO:0006730">
    <property type="term" value="P:one-carbon metabolic process"/>
    <property type="evidence" value="ECO:0007669"/>
    <property type="project" value="UniProtKB-KW"/>
</dbReference>
<dbReference type="GO" id="GO:0006556">
    <property type="term" value="P:S-adenosylmethionine biosynthetic process"/>
    <property type="evidence" value="ECO:0007669"/>
    <property type="project" value="UniProtKB-UniRule"/>
</dbReference>
<dbReference type="CDD" id="cd18079">
    <property type="entry name" value="S-AdoMet_synt"/>
    <property type="match status" value="1"/>
</dbReference>
<dbReference type="FunFam" id="3.30.300.10:FF:000001">
    <property type="entry name" value="S-adenosylmethionine synthase"/>
    <property type="match status" value="1"/>
</dbReference>
<dbReference type="FunFam" id="3.30.300.10:FF:000003">
    <property type="entry name" value="S-adenosylmethionine synthase"/>
    <property type="match status" value="1"/>
</dbReference>
<dbReference type="Gene3D" id="3.30.300.10">
    <property type="match status" value="3"/>
</dbReference>
<dbReference type="HAMAP" id="MF_00086">
    <property type="entry name" value="S_AdoMet_synth1"/>
    <property type="match status" value="1"/>
</dbReference>
<dbReference type="InterPro" id="IPR022631">
    <property type="entry name" value="ADOMET_SYNTHASE_CS"/>
</dbReference>
<dbReference type="InterPro" id="IPR022630">
    <property type="entry name" value="S-AdoMet_synt_C"/>
</dbReference>
<dbReference type="InterPro" id="IPR022629">
    <property type="entry name" value="S-AdoMet_synt_central"/>
</dbReference>
<dbReference type="InterPro" id="IPR022628">
    <property type="entry name" value="S-AdoMet_synt_N"/>
</dbReference>
<dbReference type="InterPro" id="IPR002133">
    <property type="entry name" value="S-AdoMet_synthetase"/>
</dbReference>
<dbReference type="InterPro" id="IPR022636">
    <property type="entry name" value="S-AdoMet_synthetase_sfam"/>
</dbReference>
<dbReference type="NCBIfam" id="TIGR01034">
    <property type="entry name" value="metK"/>
    <property type="match status" value="1"/>
</dbReference>
<dbReference type="PANTHER" id="PTHR11964">
    <property type="entry name" value="S-ADENOSYLMETHIONINE SYNTHETASE"/>
    <property type="match status" value="1"/>
</dbReference>
<dbReference type="Pfam" id="PF02773">
    <property type="entry name" value="S-AdoMet_synt_C"/>
    <property type="match status" value="1"/>
</dbReference>
<dbReference type="Pfam" id="PF02772">
    <property type="entry name" value="S-AdoMet_synt_M"/>
    <property type="match status" value="1"/>
</dbReference>
<dbReference type="Pfam" id="PF00438">
    <property type="entry name" value="S-AdoMet_synt_N"/>
    <property type="match status" value="1"/>
</dbReference>
<dbReference type="PIRSF" id="PIRSF000497">
    <property type="entry name" value="MAT"/>
    <property type="match status" value="1"/>
</dbReference>
<dbReference type="SUPFAM" id="SSF55973">
    <property type="entry name" value="S-adenosylmethionine synthetase"/>
    <property type="match status" value="3"/>
</dbReference>
<dbReference type="PROSITE" id="PS00376">
    <property type="entry name" value="ADOMET_SYNTHASE_1"/>
    <property type="match status" value="1"/>
</dbReference>
<dbReference type="PROSITE" id="PS00377">
    <property type="entry name" value="ADOMET_SYNTHASE_2"/>
    <property type="match status" value="1"/>
</dbReference>
<proteinExistence type="inferred from homology"/>
<sequence>MAKHLFTSESVSEGHPDKIADQISDAVLDAILEQDPKARVACETYVKTGMVLVGGEITTSAWVDIEEITRNTVREIGYVHSDMGFDANSCAVLSAIGKQSPDINQGVDRADPLEQGAGDQGLMFGYATNETDVLMPAPITYAHRLVQRQAEVRKNGTLPWLRPDAKSQVTFQYDDGKIVGIDAVVLSTQHSEEIDQKSLQEAVMEEIIKPILPAEWLTSATKFFINPTGRFVIGGPMGDCGLTGRKIIVDTYGGMARHGGGAFSGKDPSKVDRSAAYAARYVAKNIVAAGLADRCEIQVSYAIGVAEPTSIMVETFGTEKVPSEQLTLLVREFFDLRPYGLIQMLDLLHPIYKETAAYGHFGREHFPWEKTDKAQLLRDAAGLK</sequence>
<evidence type="ECO:0000255" key="1">
    <source>
        <dbReference type="HAMAP-Rule" id="MF_00086"/>
    </source>
</evidence>
<protein>
    <recommendedName>
        <fullName evidence="1">S-adenosylmethionine synthase</fullName>
        <shortName evidence="1">AdoMet synthase</shortName>
        <ecNumber evidence="1">2.5.1.6</ecNumber>
    </recommendedName>
    <alternativeName>
        <fullName evidence="1">MAT</fullName>
    </alternativeName>
    <alternativeName>
        <fullName evidence="1">Methionine adenosyltransferase</fullName>
    </alternativeName>
</protein>
<reference key="1">
    <citation type="journal article" date="2008" name="J. Bacteriol.">
        <title>Insights into the environmental resistance gene pool from the genome sequence of the multidrug-resistant environmental isolate Escherichia coli SMS-3-5.</title>
        <authorList>
            <person name="Fricke W.F."/>
            <person name="Wright M.S."/>
            <person name="Lindell A.H."/>
            <person name="Harkins D.M."/>
            <person name="Baker-Austin C."/>
            <person name="Ravel J."/>
            <person name="Stepanauskas R."/>
        </authorList>
    </citation>
    <scope>NUCLEOTIDE SEQUENCE [LARGE SCALE GENOMIC DNA]</scope>
    <source>
        <strain>SMS-3-5 / SECEC</strain>
    </source>
</reference>
<name>METK_ECOSM</name>
<accession>B1LDF1</accession>
<gene>
    <name evidence="1" type="primary">metK</name>
    <name type="ordered locus">EcSMS35_3084</name>
</gene>
<feature type="chain" id="PRO_1000196708" description="S-adenosylmethionine synthase">
    <location>
        <begin position="1"/>
        <end position="384"/>
    </location>
</feature>
<feature type="region of interest" description="Flexible loop" evidence="1">
    <location>
        <begin position="99"/>
        <end position="109"/>
    </location>
</feature>
<feature type="binding site" description="in other chain" evidence="1">
    <location>
        <position position="15"/>
    </location>
    <ligand>
        <name>ATP</name>
        <dbReference type="ChEBI" id="CHEBI:30616"/>
        <note>ligand shared between two neighboring subunits</note>
    </ligand>
</feature>
<feature type="binding site" evidence="1">
    <location>
        <position position="17"/>
    </location>
    <ligand>
        <name>Mg(2+)</name>
        <dbReference type="ChEBI" id="CHEBI:18420"/>
    </ligand>
</feature>
<feature type="binding site" evidence="1">
    <location>
        <position position="43"/>
    </location>
    <ligand>
        <name>K(+)</name>
        <dbReference type="ChEBI" id="CHEBI:29103"/>
    </ligand>
</feature>
<feature type="binding site" description="in other chain" evidence="1">
    <location>
        <position position="56"/>
    </location>
    <ligand>
        <name>L-methionine</name>
        <dbReference type="ChEBI" id="CHEBI:57844"/>
        <note>ligand shared between two neighboring subunits</note>
    </ligand>
</feature>
<feature type="binding site" description="in other chain" evidence="1">
    <location>
        <position position="99"/>
    </location>
    <ligand>
        <name>L-methionine</name>
        <dbReference type="ChEBI" id="CHEBI:57844"/>
        <note>ligand shared between two neighboring subunits</note>
    </ligand>
</feature>
<feature type="binding site" description="in other chain" evidence="1">
    <location>
        <begin position="164"/>
        <end position="166"/>
    </location>
    <ligand>
        <name>ATP</name>
        <dbReference type="ChEBI" id="CHEBI:30616"/>
        <note>ligand shared between two neighboring subunits</note>
    </ligand>
</feature>
<feature type="binding site" description="in other chain" evidence="1">
    <location>
        <begin position="230"/>
        <end position="231"/>
    </location>
    <ligand>
        <name>ATP</name>
        <dbReference type="ChEBI" id="CHEBI:30616"/>
        <note>ligand shared between two neighboring subunits</note>
    </ligand>
</feature>
<feature type="binding site" evidence="1">
    <location>
        <position position="239"/>
    </location>
    <ligand>
        <name>ATP</name>
        <dbReference type="ChEBI" id="CHEBI:30616"/>
        <note>ligand shared between two neighboring subunits</note>
    </ligand>
</feature>
<feature type="binding site" evidence="1">
    <location>
        <position position="239"/>
    </location>
    <ligand>
        <name>L-methionine</name>
        <dbReference type="ChEBI" id="CHEBI:57844"/>
        <note>ligand shared between two neighboring subunits</note>
    </ligand>
</feature>
<feature type="binding site" description="in other chain" evidence="1">
    <location>
        <begin position="245"/>
        <end position="246"/>
    </location>
    <ligand>
        <name>ATP</name>
        <dbReference type="ChEBI" id="CHEBI:30616"/>
        <note>ligand shared between two neighboring subunits</note>
    </ligand>
</feature>
<feature type="binding site" evidence="1">
    <location>
        <position position="262"/>
    </location>
    <ligand>
        <name>ATP</name>
        <dbReference type="ChEBI" id="CHEBI:30616"/>
        <note>ligand shared between two neighboring subunits</note>
    </ligand>
</feature>
<feature type="binding site" evidence="1">
    <location>
        <position position="266"/>
    </location>
    <ligand>
        <name>ATP</name>
        <dbReference type="ChEBI" id="CHEBI:30616"/>
        <note>ligand shared between two neighboring subunits</note>
    </ligand>
</feature>
<feature type="binding site" description="in other chain" evidence="1">
    <location>
        <position position="270"/>
    </location>
    <ligand>
        <name>L-methionine</name>
        <dbReference type="ChEBI" id="CHEBI:57844"/>
        <note>ligand shared between two neighboring subunits</note>
    </ligand>
</feature>